<accession>Q2A1P9</accession>
<gene>
    <name evidence="1" type="primary">hemA</name>
    <name type="ordered locus">FTL_1722</name>
</gene>
<evidence type="ECO:0000255" key="1">
    <source>
        <dbReference type="HAMAP-Rule" id="MF_00087"/>
    </source>
</evidence>
<feature type="chain" id="PRO_1000004622" description="Glutamyl-tRNA reductase">
    <location>
        <begin position="1"/>
        <end position="414"/>
    </location>
</feature>
<feature type="active site" description="Nucleophile" evidence="1">
    <location>
        <position position="50"/>
    </location>
</feature>
<feature type="binding site" evidence="1">
    <location>
        <begin position="49"/>
        <end position="52"/>
    </location>
    <ligand>
        <name>substrate</name>
    </ligand>
</feature>
<feature type="binding site" evidence="1">
    <location>
        <position position="108"/>
    </location>
    <ligand>
        <name>substrate</name>
    </ligand>
</feature>
<feature type="binding site" evidence="1">
    <location>
        <begin position="113"/>
        <end position="115"/>
    </location>
    <ligand>
        <name>substrate</name>
    </ligand>
</feature>
<feature type="binding site" evidence="1">
    <location>
        <position position="119"/>
    </location>
    <ligand>
        <name>substrate</name>
    </ligand>
</feature>
<feature type="binding site" evidence="1">
    <location>
        <begin position="188"/>
        <end position="193"/>
    </location>
    <ligand>
        <name>NADP(+)</name>
        <dbReference type="ChEBI" id="CHEBI:58349"/>
    </ligand>
</feature>
<feature type="site" description="Important for activity" evidence="1">
    <location>
        <position position="98"/>
    </location>
</feature>
<reference key="1">
    <citation type="submission" date="2006-03" db="EMBL/GenBank/DDBJ databases">
        <title>Complete genome sequence of Francisella tularensis LVS (Live Vaccine Strain).</title>
        <authorList>
            <person name="Chain P."/>
            <person name="Larimer F."/>
            <person name="Land M."/>
            <person name="Stilwagen S."/>
            <person name="Larsson P."/>
            <person name="Bearden S."/>
            <person name="Chu M."/>
            <person name="Oyston P."/>
            <person name="Forsman M."/>
            <person name="Andersson S."/>
            <person name="Lindler L."/>
            <person name="Titball R."/>
            <person name="Garcia E."/>
        </authorList>
    </citation>
    <scope>NUCLEOTIDE SEQUENCE [LARGE SCALE GENOMIC DNA]</scope>
    <source>
        <strain>LVS</strain>
    </source>
</reference>
<keyword id="KW-0521">NADP</keyword>
<keyword id="KW-0560">Oxidoreductase</keyword>
<keyword id="KW-0627">Porphyrin biosynthesis</keyword>
<keyword id="KW-1185">Reference proteome</keyword>
<comment type="function">
    <text evidence="1">Catalyzes the NADPH-dependent reduction of glutamyl-tRNA(Glu) to glutamate 1-semialdehyde (GSA).</text>
</comment>
<comment type="catalytic activity">
    <reaction evidence="1">
        <text>(S)-4-amino-5-oxopentanoate + tRNA(Glu) + NADP(+) = L-glutamyl-tRNA(Glu) + NADPH + H(+)</text>
        <dbReference type="Rhea" id="RHEA:12344"/>
        <dbReference type="Rhea" id="RHEA-COMP:9663"/>
        <dbReference type="Rhea" id="RHEA-COMP:9680"/>
        <dbReference type="ChEBI" id="CHEBI:15378"/>
        <dbReference type="ChEBI" id="CHEBI:57501"/>
        <dbReference type="ChEBI" id="CHEBI:57783"/>
        <dbReference type="ChEBI" id="CHEBI:58349"/>
        <dbReference type="ChEBI" id="CHEBI:78442"/>
        <dbReference type="ChEBI" id="CHEBI:78520"/>
        <dbReference type="EC" id="1.2.1.70"/>
    </reaction>
</comment>
<comment type="pathway">
    <text evidence="1">Porphyrin-containing compound metabolism; protoporphyrin-IX biosynthesis; 5-aminolevulinate from L-glutamyl-tRNA(Glu): step 1/2.</text>
</comment>
<comment type="subunit">
    <text evidence="1">Homodimer.</text>
</comment>
<comment type="domain">
    <text evidence="1">Possesses an unusual extended V-shaped dimeric structure with each monomer consisting of three distinct domains arranged along a curved 'spinal' alpha-helix. The N-terminal catalytic domain specifically recognizes the glutamate moiety of the substrate. The second domain is the NADPH-binding domain, and the third C-terminal domain is responsible for dimerization.</text>
</comment>
<comment type="miscellaneous">
    <text evidence="1">During catalysis, the active site Cys acts as a nucleophile attacking the alpha-carbonyl group of tRNA-bound glutamate with the formation of a thioester intermediate between enzyme and glutamate, and the concomitant release of tRNA(Glu). The thioester intermediate is finally reduced by direct hydride transfer from NADPH, to form the product GSA.</text>
</comment>
<comment type="similarity">
    <text evidence="1">Belongs to the glutamyl-tRNA reductase family.</text>
</comment>
<organism>
    <name type="scientific">Francisella tularensis subsp. holarctica (strain LVS)</name>
    <dbReference type="NCBI Taxonomy" id="376619"/>
    <lineage>
        <taxon>Bacteria</taxon>
        <taxon>Pseudomonadati</taxon>
        <taxon>Pseudomonadota</taxon>
        <taxon>Gammaproteobacteria</taxon>
        <taxon>Thiotrichales</taxon>
        <taxon>Francisellaceae</taxon>
        <taxon>Francisella</taxon>
    </lineage>
</organism>
<proteinExistence type="inferred from homology"/>
<protein>
    <recommendedName>
        <fullName evidence="1">Glutamyl-tRNA reductase</fullName>
        <shortName evidence="1">GluTR</shortName>
        <ecNumber evidence="1">1.2.1.70</ecNumber>
    </recommendedName>
</protein>
<name>HEM1_FRATH</name>
<dbReference type="EC" id="1.2.1.70" evidence="1"/>
<dbReference type="EMBL" id="AM233362">
    <property type="protein sequence ID" value="CAJ80161.1"/>
    <property type="molecule type" value="Genomic_DNA"/>
</dbReference>
<dbReference type="RefSeq" id="WP_003019581.1">
    <property type="nucleotide sequence ID" value="NZ_CP009694.1"/>
</dbReference>
<dbReference type="SMR" id="Q2A1P9"/>
<dbReference type="KEGG" id="ftl:FTL_1722"/>
<dbReference type="UniPathway" id="UPA00251">
    <property type="reaction ID" value="UER00316"/>
</dbReference>
<dbReference type="Proteomes" id="UP000001944">
    <property type="component" value="Chromosome"/>
</dbReference>
<dbReference type="GO" id="GO:0008883">
    <property type="term" value="F:glutamyl-tRNA reductase activity"/>
    <property type="evidence" value="ECO:0007669"/>
    <property type="project" value="UniProtKB-UniRule"/>
</dbReference>
<dbReference type="GO" id="GO:0050661">
    <property type="term" value="F:NADP binding"/>
    <property type="evidence" value="ECO:0007669"/>
    <property type="project" value="InterPro"/>
</dbReference>
<dbReference type="GO" id="GO:0019353">
    <property type="term" value="P:protoporphyrinogen IX biosynthetic process from glutamate"/>
    <property type="evidence" value="ECO:0007669"/>
    <property type="project" value="TreeGrafter"/>
</dbReference>
<dbReference type="CDD" id="cd05213">
    <property type="entry name" value="NAD_bind_Glutamyl_tRNA_reduct"/>
    <property type="match status" value="1"/>
</dbReference>
<dbReference type="FunFam" id="3.30.460.30:FF:000001">
    <property type="entry name" value="Glutamyl-tRNA reductase"/>
    <property type="match status" value="1"/>
</dbReference>
<dbReference type="Gene3D" id="3.30.460.30">
    <property type="entry name" value="Glutamyl-tRNA reductase, N-terminal domain"/>
    <property type="match status" value="1"/>
</dbReference>
<dbReference type="Gene3D" id="3.40.50.720">
    <property type="entry name" value="NAD(P)-binding Rossmann-like Domain"/>
    <property type="match status" value="1"/>
</dbReference>
<dbReference type="HAMAP" id="MF_00087">
    <property type="entry name" value="Glu_tRNA_reductase"/>
    <property type="match status" value="1"/>
</dbReference>
<dbReference type="InterPro" id="IPR000343">
    <property type="entry name" value="4pyrrol_synth_GluRdtase"/>
</dbReference>
<dbReference type="InterPro" id="IPR015896">
    <property type="entry name" value="4pyrrol_synth_GluRdtase_dimer"/>
</dbReference>
<dbReference type="InterPro" id="IPR015895">
    <property type="entry name" value="4pyrrol_synth_GluRdtase_N"/>
</dbReference>
<dbReference type="InterPro" id="IPR018214">
    <property type="entry name" value="GluRdtase_CS"/>
</dbReference>
<dbReference type="InterPro" id="IPR036453">
    <property type="entry name" value="GluRdtase_dimer_dom_sf"/>
</dbReference>
<dbReference type="InterPro" id="IPR036343">
    <property type="entry name" value="GluRdtase_N_sf"/>
</dbReference>
<dbReference type="InterPro" id="IPR036291">
    <property type="entry name" value="NAD(P)-bd_dom_sf"/>
</dbReference>
<dbReference type="InterPro" id="IPR006151">
    <property type="entry name" value="Shikm_DH/Glu-tRNA_Rdtase"/>
</dbReference>
<dbReference type="NCBIfam" id="TIGR01035">
    <property type="entry name" value="hemA"/>
    <property type="match status" value="1"/>
</dbReference>
<dbReference type="NCBIfam" id="NF010548">
    <property type="entry name" value="PRK13940.1"/>
    <property type="match status" value="1"/>
</dbReference>
<dbReference type="PANTHER" id="PTHR43013">
    <property type="entry name" value="GLUTAMYL-TRNA REDUCTASE"/>
    <property type="match status" value="1"/>
</dbReference>
<dbReference type="PANTHER" id="PTHR43013:SF1">
    <property type="entry name" value="GLUTAMYL-TRNA REDUCTASE"/>
    <property type="match status" value="1"/>
</dbReference>
<dbReference type="Pfam" id="PF00745">
    <property type="entry name" value="GlutR_dimer"/>
    <property type="match status" value="1"/>
</dbReference>
<dbReference type="Pfam" id="PF05201">
    <property type="entry name" value="GlutR_N"/>
    <property type="match status" value="1"/>
</dbReference>
<dbReference type="Pfam" id="PF01488">
    <property type="entry name" value="Shikimate_DH"/>
    <property type="match status" value="1"/>
</dbReference>
<dbReference type="PIRSF" id="PIRSF000445">
    <property type="entry name" value="4pyrrol_synth_GluRdtase"/>
    <property type="match status" value="1"/>
</dbReference>
<dbReference type="SUPFAM" id="SSF69742">
    <property type="entry name" value="Glutamyl tRNA-reductase catalytic, N-terminal domain"/>
    <property type="match status" value="1"/>
</dbReference>
<dbReference type="SUPFAM" id="SSF69075">
    <property type="entry name" value="Glutamyl tRNA-reductase dimerization domain"/>
    <property type="match status" value="1"/>
</dbReference>
<dbReference type="SUPFAM" id="SSF51735">
    <property type="entry name" value="NAD(P)-binding Rossmann-fold domains"/>
    <property type="match status" value="1"/>
</dbReference>
<dbReference type="PROSITE" id="PS00747">
    <property type="entry name" value="GLUTR"/>
    <property type="match status" value="1"/>
</dbReference>
<sequence>MALISLAIDYKKSPIEVRSEFALSGLDVSMLYRSILAIDNVVHAVILSTCNRTEVYLEISDLRVVDDILVWWQGYVRNPNYKIKDYFKLRQGTEVIMHLMKLACGLESMVLGEPQILGQVKDSYTLSKKNHAIGKELDRVFQKVFATAKRVRSETRIGYCPVSVAFSAITLAKRQLDNISSKNVLIIGAGQTGELLFRHVTALAPKQIMLANRTIEKAQKITSVFRNASAHYLSELPQLIKKADIIIAAVNVLEYIVTCKYVGDKPRVFIDISIPQALDPKLGELEQNVYYCVDDINAVIEDNKDKRKYESSKAQKIIVKSLEEYLEKEKAIISNSAIKELFQKADGLVDLSLEKSLAKIRNGKDAEEIIKRFAYEIKKKVLHYPVVGMKEASKQGRSDCLVCMKRMFGLNVEK</sequence>